<accession>Q3BWF4</accession>
<comment type="function">
    <text evidence="1">Plays an important role in the de novo pathway of purine nucleotide biosynthesis. Catalyzes the first committed step in the biosynthesis of AMP from IMP.</text>
</comment>
<comment type="catalytic activity">
    <reaction evidence="1">
        <text>IMP + L-aspartate + GTP = N(6)-(1,2-dicarboxyethyl)-AMP + GDP + phosphate + 2 H(+)</text>
        <dbReference type="Rhea" id="RHEA:15753"/>
        <dbReference type="ChEBI" id="CHEBI:15378"/>
        <dbReference type="ChEBI" id="CHEBI:29991"/>
        <dbReference type="ChEBI" id="CHEBI:37565"/>
        <dbReference type="ChEBI" id="CHEBI:43474"/>
        <dbReference type="ChEBI" id="CHEBI:57567"/>
        <dbReference type="ChEBI" id="CHEBI:58053"/>
        <dbReference type="ChEBI" id="CHEBI:58189"/>
        <dbReference type="EC" id="6.3.4.4"/>
    </reaction>
</comment>
<comment type="cofactor">
    <cofactor evidence="1">
        <name>Mg(2+)</name>
        <dbReference type="ChEBI" id="CHEBI:18420"/>
    </cofactor>
    <text evidence="1">Binds 1 Mg(2+) ion per subunit.</text>
</comment>
<comment type="pathway">
    <text evidence="1">Purine metabolism; AMP biosynthesis via de novo pathway; AMP from IMP: step 1/2.</text>
</comment>
<comment type="subunit">
    <text evidence="1">Homodimer.</text>
</comment>
<comment type="subcellular location">
    <subcellularLocation>
        <location evidence="1">Cytoplasm</location>
    </subcellularLocation>
</comment>
<comment type="similarity">
    <text evidence="1">Belongs to the adenylosuccinate synthetase family.</text>
</comment>
<keyword id="KW-0963">Cytoplasm</keyword>
<keyword id="KW-0342">GTP-binding</keyword>
<keyword id="KW-0436">Ligase</keyword>
<keyword id="KW-0460">Magnesium</keyword>
<keyword id="KW-0479">Metal-binding</keyword>
<keyword id="KW-0547">Nucleotide-binding</keyword>
<keyword id="KW-0658">Purine biosynthesis</keyword>
<sequence>MGQSVVVLGAQWGDEGKGKIVDLLTEEIGAVVRFQGGHNAGHTLVINGKKTVLHLIPSGILRDDALCLIGNGVVISPAALIKEISELEDAGVEVRSRLKISPAAPLIMPYHIALDQAREKAAGGKAIGTTGRGIGPAYEDKVARRGIRIADLHYPPQLEELLRTALDYHNFVLTKYLGVEAVDFQKTYDEALAFGEYVQPMKSDVAGILHDLRKQGKRVLFEGAQGALLDIDHGTYPYVTSSNTTVGGALAGTGVGADAIDYVLGIAKAYATRVGGGPFPTELDDEVGQGIRDRGAEYGASTGRPRRCGWMDIVALKRAVAINGISGLCITKLDVLDGMEKLKICIAYEYHGKRTEYAPLDAQGWEECTPVYLEFPGWSENTHGITVWDDLPPAARAYLRALEELAGCPISIVSTGPDRDHTMVLQDPFA</sequence>
<name>PURA_XANE5</name>
<feature type="chain" id="PRO_0000224336" description="Adenylosuccinate synthetase">
    <location>
        <begin position="1"/>
        <end position="430"/>
    </location>
</feature>
<feature type="active site" description="Proton acceptor" evidence="1">
    <location>
        <position position="14"/>
    </location>
</feature>
<feature type="active site" description="Proton donor" evidence="1">
    <location>
        <position position="42"/>
    </location>
</feature>
<feature type="binding site" evidence="1">
    <location>
        <begin position="13"/>
        <end position="19"/>
    </location>
    <ligand>
        <name>GTP</name>
        <dbReference type="ChEBI" id="CHEBI:37565"/>
    </ligand>
</feature>
<feature type="binding site" description="in other chain" evidence="1">
    <location>
        <begin position="14"/>
        <end position="17"/>
    </location>
    <ligand>
        <name>IMP</name>
        <dbReference type="ChEBI" id="CHEBI:58053"/>
        <note>ligand shared between dimeric partners</note>
    </ligand>
</feature>
<feature type="binding site" evidence="1">
    <location>
        <position position="14"/>
    </location>
    <ligand>
        <name>Mg(2+)</name>
        <dbReference type="ChEBI" id="CHEBI:18420"/>
    </ligand>
</feature>
<feature type="binding site" description="in other chain" evidence="1">
    <location>
        <begin position="39"/>
        <end position="42"/>
    </location>
    <ligand>
        <name>IMP</name>
        <dbReference type="ChEBI" id="CHEBI:58053"/>
        <note>ligand shared between dimeric partners</note>
    </ligand>
</feature>
<feature type="binding site" evidence="1">
    <location>
        <begin position="41"/>
        <end position="43"/>
    </location>
    <ligand>
        <name>GTP</name>
        <dbReference type="ChEBI" id="CHEBI:37565"/>
    </ligand>
</feature>
<feature type="binding site" evidence="1">
    <location>
        <position position="41"/>
    </location>
    <ligand>
        <name>Mg(2+)</name>
        <dbReference type="ChEBI" id="CHEBI:18420"/>
    </ligand>
</feature>
<feature type="binding site" description="in other chain" evidence="1">
    <location>
        <position position="130"/>
    </location>
    <ligand>
        <name>IMP</name>
        <dbReference type="ChEBI" id="CHEBI:58053"/>
        <note>ligand shared between dimeric partners</note>
    </ligand>
</feature>
<feature type="binding site" evidence="1">
    <location>
        <position position="144"/>
    </location>
    <ligand>
        <name>IMP</name>
        <dbReference type="ChEBI" id="CHEBI:58053"/>
        <note>ligand shared between dimeric partners</note>
    </ligand>
</feature>
<feature type="binding site" description="in other chain" evidence="1">
    <location>
        <position position="225"/>
    </location>
    <ligand>
        <name>IMP</name>
        <dbReference type="ChEBI" id="CHEBI:58053"/>
        <note>ligand shared between dimeric partners</note>
    </ligand>
</feature>
<feature type="binding site" description="in other chain" evidence="1">
    <location>
        <position position="240"/>
    </location>
    <ligand>
        <name>IMP</name>
        <dbReference type="ChEBI" id="CHEBI:58053"/>
        <note>ligand shared between dimeric partners</note>
    </ligand>
</feature>
<feature type="binding site" evidence="1">
    <location>
        <begin position="300"/>
        <end position="306"/>
    </location>
    <ligand>
        <name>substrate</name>
    </ligand>
</feature>
<feature type="binding site" description="in other chain" evidence="1">
    <location>
        <position position="304"/>
    </location>
    <ligand>
        <name>IMP</name>
        <dbReference type="ChEBI" id="CHEBI:58053"/>
        <note>ligand shared between dimeric partners</note>
    </ligand>
</feature>
<feature type="binding site" evidence="1">
    <location>
        <position position="306"/>
    </location>
    <ligand>
        <name>GTP</name>
        <dbReference type="ChEBI" id="CHEBI:37565"/>
    </ligand>
</feature>
<feature type="binding site" evidence="1">
    <location>
        <begin position="332"/>
        <end position="334"/>
    </location>
    <ligand>
        <name>GTP</name>
        <dbReference type="ChEBI" id="CHEBI:37565"/>
    </ligand>
</feature>
<feature type="binding site" evidence="1">
    <location>
        <begin position="414"/>
        <end position="416"/>
    </location>
    <ligand>
        <name>GTP</name>
        <dbReference type="ChEBI" id="CHEBI:37565"/>
    </ligand>
</feature>
<protein>
    <recommendedName>
        <fullName evidence="1">Adenylosuccinate synthetase</fullName>
        <shortName evidence="1">AMPSase</shortName>
        <shortName evidence="1">AdSS</shortName>
        <ecNumber evidence="1">6.3.4.4</ecNumber>
    </recommendedName>
    <alternativeName>
        <fullName evidence="1">IMP--aspartate ligase</fullName>
    </alternativeName>
</protein>
<organism>
    <name type="scientific">Xanthomonas euvesicatoria pv. vesicatoria (strain 85-10)</name>
    <name type="common">Xanthomonas campestris pv. vesicatoria</name>
    <dbReference type="NCBI Taxonomy" id="316273"/>
    <lineage>
        <taxon>Bacteria</taxon>
        <taxon>Pseudomonadati</taxon>
        <taxon>Pseudomonadota</taxon>
        <taxon>Gammaproteobacteria</taxon>
        <taxon>Lysobacterales</taxon>
        <taxon>Lysobacteraceae</taxon>
        <taxon>Xanthomonas</taxon>
    </lineage>
</organism>
<evidence type="ECO:0000255" key="1">
    <source>
        <dbReference type="HAMAP-Rule" id="MF_00011"/>
    </source>
</evidence>
<gene>
    <name evidence="1" type="primary">purA</name>
    <name type="ordered locus">XCV1178</name>
</gene>
<dbReference type="EC" id="6.3.4.4" evidence="1"/>
<dbReference type="EMBL" id="AM039952">
    <property type="protein sequence ID" value="CAJ22809.1"/>
    <property type="molecule type" value="Genomic_DNA"/>
</dbReference>
<dbReference type="RefSeq" id="WP_005913957.1">
    <property type="nucleotide sequence ID" value="NZ_CP017190.1"/>
</dbReference>
<dbReference type="SMR" id="Q3BWF4"/>
<dbReference type="STRING" id="456327.BJD11_16760"/>
<dbReference type="KEGG" id="xcv:XCV1178"/>
<dbReference type="eggNOG" id="COG0104">
    <property type="taxonomic scope" value="Bacteria"/>
</dbReference>
<dbReference type="HOGENOM" id="CLU_029848_0_0_6"/>
<dbReference type="UniPathway" id="UPA00075">
    <property type="reaction ID" value="UER00335"/>
</dbReference>
<dbReference type="Proteomes" id="UP000007069">
    <property type="component" value="Chromosome"/>
</dbReference>
<dbReference type="GO" id="GO:0005737">
    <property type="term" value="C:cytoplasm"/>
    <property type="evidence" value="ECO:0007669"/>
    <property type="project" value="UniProtKB-SubCell"/>
</dbReference>
<dbReference type="GO" id="GO:0004019">
    <property type="term" value="F:adenylosuccinate synthase activity"/>
    <property type="evidence" value="ECO:0007669"/>
    <property type="project" value="UniProtKB-UniRule"/>
</dbReference>
<dbReference type="GO" id="GO:0005525">
    <property type="term" value="F:GTP binding"/>
    <property type="evidence" value="ECO:0007669"/>
    <property type="project" value="UniProtKB-UniRule"/>
</dbReference>
<dbReference type="GO" id="GO:0000287">
    <property type="term" value="F:magnesium ion binding"/>
    <property type="evidence" value="ECO:0007669"/>
    <property type="project" value="UniProtKB-UniRule"/>
</dbReference>
<dbReference type="GO" id="GO:0044208">
    <property type="term" value="P:'de novo' AMP biosynthetic process"/>
    <property type="evidence" value="ECO:0007669"/>
    <property type="project" value="UniProtKB-UniRule"/>
</dbReference>
<dbReference type="GO" id="GO:0046040">
    <property type="term" value="P:IMP metabolic process"/>
    <property type="evidence" value="ECO:0007669"/>
    <property type="project" value="TreeGrafter"/>
</dbReference>
<dbReference type="CDD" id="cd03108">
    <property type="entry name" value="AdSS"/>
    <property type="match status" value="1"/>
</dbReference>
<dbReference type="FunFam" id="1.10.300.10:FF:000001">
    <property type="entry name" value="Adenylosuccinate synthetase"/>
    <property type="match status" value="1"/>
</dbReference>
<dbReference type="FunFam" id="3.90.170.10:FF:000001">
    <property type="entry name" value="Adenylosuccinate synthetase"/>
    <property type="match status" value="1"/>
</dbReference>
<dbReference type="Gene3D" id="3.40.440.10">
    <property type="entry name" value="Adenylosuccinate Synthetase, subunit A, domain 1"/>
    <property type="match status" value="1"/>
</dbReference>
<dbReference type="Gene3D" id="1.10.300.10">
    <property type="entry name" value="Adenylosuccinate Synthetase, subunit A, domain 2"/>
    <property type="match status" value="1"/>
</dbReference>
<dbReference type="Gene3D" id="3.90.170.10">
    <property type="entry name" value="Adenylosuccinate Synthetase, subunit A, domain 3"/>
    <property type="match status" value="1"/>
</dbReference>
<dbReference type="HAMAP" id="MF_00011">
    <property type="entry name" value="Adenylosucc_synth"/>
    <property type="match status" value="1"/>
</dbReference>
<dbReference type="InterPro" id="IPR018220">
    <property type="entry name" value="Adenylosuccin_syn_GTP-bd"/>
</dbReference>
<dbReference type="InterPro" id="IPR033128">
    <property type="entry name" value="Adenylosuccin_syn_Lys_AS"/>
</dbReference>
<dbReference type="InterPro" id="IPR042109">
    <property type="entry name" value="Adenylosuccinate_synth_dom1"/>
</dbReference>
<dbReference type="InterPro" id="IPR042110">
    <property type="entry name" value="Adenylosuccinate_synth_dom2"/>
</dbReference>
<dbReference type="InterPro" id="IPR042111">
    <property type="entry name" value="Adenylosuccinate_synth_dom3"/>
</dbReference>
<dbReference type="InterPro" id="IPR001114">
    <property type="entry name" value="Adenylosuccinate_synthetase"/>
</dbReference>
<dbReference type="InterPro" id="IPR027417">
    <property type="entry name" value="P-loop_NTPase"/>
</dbReference>
<dbReference type="NCBIfam" id="NF002223">
    <property type="entry name" value="PRK01117.1"/>
    <property type="match status" value="1"/>
</dbReference>
<dbReference type="NCBIfam" id="TIGR00184">
    <property type="entry name" value="purA"/>
    <property type="match status" value="1"/>
</dbReference>
<dbReference type="PANTHER" id="PTHR11846">
    <property type="entry name" value="ADENYLOSUCCINATE SYNTHETASE"/>
    <property type="match status" value="1"/>
</dbReference>
<dbReference type="PANTHER" id="PTHR11846:SF0">
    <property type="entry name" value="ADENYLOSUCCINATE SYNTHETASE"/>
    <property type="match status" value="1"/>
</dbReference>
<dbReference type="Pfam" id="PF00709">
    <property type="entry name" value="Adenylsucc_synt"/>
    <property type="match status" value="1"/>
</dbReference>
<dbReference type="SMART" id="SM00788">
    <property type="entry name" value="Adenylsucc_synt"/>
    <property type="match status" value="1"/>
</dbReference>
<dbReference type="SUPFAM" id="SSF52540">
    <property type="entry name" value="P-loop containing nucleoside triphosphate hydrolases"/>
    <property type="match status" value="1"/>
</dbReference>
<dbReference type="PROSITE" id="PS01266">
    <property type="entry name" value="ADENYLOSUCCIN_SYN_1"/>
    <property type="match status" value="1"/>
</dbReference>
<dbReference type="PROSITE" id="PS00513">
    <property type="entry name" value="ADENYLOSUCCIN_SYN_2"/>
    <property type="match status" value="1"/>
</dbReference>
<reference key="1">
    <citation type="journal article" date="2005" name="J. Bacteriol.">
        <title>Insights into genome plasticity and pathogenicity of the plant pathogenic Bacterium Xanthomonas campestris pv. vesicatoria revealed by the complete genome sequence.</title>
        <authorList>
            <person name="Thieme F."/>
            <person name="Koebnik R."/>
            <person name="Bekel T."/>
            <person name="Berger C."/>
            <person name="Boch J."/>
            <person name="Buettner D."/>
            <person name="Caldana C."/>
            <person name="Gaigalat L."/>
            <person name="Goesmann A."/>
            <person name="Kay S."/>
            <person name="Kirchner O."/>
            <person name="Lanz C."/>
            <person name="Linke B."/>
            <person name="McHardy A.C."/>
            <person name="Meyer F."/>
            <person name="Mittenhuber G."/>
            <person name="Nies D.H."/>
            <person name="Niesbach-Kloesgen U."/>
            <person name="Patschkowski T."/>
            <person name="Rueckert C."/>
            <person name="Rupp O."/>
            <person name="Schneiker S."/>
            <person name="Schuster S.C."/>
            <person name="Vorhoelter F.J."/>
            <person name="Weber E."/>
            <person name="Puehler A."/>
            <person name="Bonas U."/>
            <person name="Bartels D."/>
            <person name="Kaiser O."/>
        </authorList>
    </citation>
    <scope>NUCLEOTIDE SEQUENCE [LARGE SCALE GENOMIC DNA]</scope>
    <source>
        <strain>85-10</strain>
    </source>
</reference>
<proteinExistence type="inferred from homology"/>